<organism>
    <name type="scientific">Homo sapiens</name>
    <name type="common">Human</name>
    <dbReference type="NCBI Taxonomy" id="9606"/>
    <lineage>
        <taxon>Eukaryota</taxon>
        <taxon>Metazoa</taxon>
        <taxon>Chordata</taxon>
        <taxon>Craniata</taxon>
        <taxon>Vertebrata</taxon>
        <taxon>Euteleostomi</taxon>
        <taxon>Mammalia</taxon>
        <taxon>Eutheria</taxon>
        <taxon>Euarchontoglires</taxon>
        <taxon>Primates</taxon>
        <taxon>Haplorrhini</taxon>
        <taxon>Catarrhini</taxon>
        <taxon>Hominidae</taxon>
        <taxon>Homo</taxon>
    </lineage>
</organism>
<gene>
    <name type="primary">FCGR2A</name>
    <name type="synonym">CD32</name>
    <name type="synonym">FCG2</name>
    <name type="synonym">FCGR2A1</name>
    <name type="synonym">IGFR2</name>
</gene>
<evidence type="ECO:0000255" key="1"/>
<evidence type="ECO:0000256" key="2">
    <source>
        <dbReference type="SAM" id="MobiDB-lite"/>
    </source>
</evidence>
<evidence type="ECO:0000269" key="3">
    <source>
    </source>
</evidence>
<evidence type="ECO:0000269" key="4">
    <source>
    </source>
</evidence>
<evidence type="ECO:0000269" key="5">
    <source>
    </source>
</evidence>
<evidence type="ECO:0000269" key="6">
    <source>
    </source>
</evidence>
<evidence type="ECO:0000269" key="7">
    <source>
    </source>
</evidence>
<evidence type="ECO:0000269" key="8">
    <source>
    </source>
</evidence>
<evidence type="ECO:0000269" key="9">
    <source>
    </source>
</evidence>
<evidence type="ECO:0000269" key="10">
    <source>
    </source>
</evidence>
<evidence type="ECO:0000269" key="11">
    <source>
    </source>
</evidence>
<evidence type="ECO:0000269" key="12">
    <source>
    </source>
</evidence>
<evidence type="ECO:0000269" key="13">
    <source>
    </source>
</evidence>
<evidence type="ECO:0000269" key="14">
    <source>
    </source>
</evidence>
<evidence type="ECO:0000269" key="15">
    <source>
    </source>
</evidence>
<evidence type="ECO:0000269" key="16">
    <source>
    </source>
</evidence>
<evidence type="ECO:0000269" key="17">
    <source>
    </source>
</evidence>
<evidence type="ECO:0000303" key="18">
    <source>
    </source>
</evidence>
<evidence type="ECO:0000305" key="19"/>
<evidence type="ECO:0007744" key="20">
    <source>
        <dbReference type="PDB" id="1FCG"/>
    </source>
</evidence>
<evidence type="ECO:0007829" key="21">
    <source>
        <dbReference type="PDB" id="1FCG"/>
    </source>
</evidence>
<evidence type="ECO:0007829" key="22">
    <source>
        <dbReference type="PDB" id="1H9V"/>
    </source>
</evidence>
<evidence type="ECO:0007829" key="23">
    <source>
        <dbReference type="PDB" id="3RY4"/>
    </source>
</evidence>
<comment type="function">
    <text evidence="9">Binds to the Fc region of immunoglobulins gamma. Low affinity receptor. By binding to IgG it initiates cellular responses against pathogens and soluble antigens. Promotes phagocytosis of opsonized antigens.</text>
</comment>
<comment type="subunit">
    <text evidence="6 7 9 14 15">Interacts with IGHG1 (PubMed:11711607). Interacts with INPP5D/SHIP1 and INPPL1/SHIP2, regulating its function. Interacts with APCS and FGR. Interacts with HCK.</text>
</comment>
<comment type="interaction">
    <interactant intactId="EBI-1395970">
        <id>P12318</id>
    </interactant>
    <interactant intactId="EBI-741480">
        <id>Q9UMX0</id>
        <label>UBQLN1</label>
    </interactant>
    <organismsDiffer>false</organismsDiffer>
    <experiments>3</experiments>
</comment>
<comment type="interaction">
    <interactant intactId="EBI-1395970">
        <id>P12318</id>
    </interactant>
    <interactant intactId="EBI-10173939">
        <id>Q9UMX0-2</id>
        <label>UBQLN1</label>
    </interactant>
    <organismsDiffer>false</organismsDiffer>
    <experiments>3</experiments>
</comment>
<comment type="interaction">
    <interactant intactId="EBI-17187481">
        <id>P12318-2</id>
    </interactant>
    <interactant intactId="EBI-10225815">
        <id>Q08AM2</id>
        <label>ADAM33</label>
    </interactant>
    <organismsDiffer>false</organismsDiffer>
    <experiments>3</experiments>
</comment>
<comment type="interaction">
    <interactant intactId="EBI-17187481">
        <id>P12318-2</id>
    </interactant>
    <interactant intactId="EBI-1754287">
        <id>Q9NRZ5</id>
        <label>AGPAT4</label>
    </interactant>
    <organismsDiffer>false</organismsDiffer>
    <experiments>3</experiments>
</comment>
<comment type="interaction">
    <interactant intactId="EBI-17187481">
        <id>P12318-2</id>
    </interactant>
    <interactant intactId="EBI-358858">
        <id>O14735</id>
        <label>CDIPT</label>
    </interactant>
    <organismsDiffer>false</organismsDiffer>
    <experiments>3</experiments>
</comment>
<comment type="interaction">
    <interactant intactId="EBI-17187481">
        <id>P12318-2</id>
    </interactant>
    <interactant intactId="EBI-11522780">
        <id>Q96DZ9-2</id>
        <label>CMTM5</label>
    </interactant>
    <organismsDiffer>false</organismsDiffer>
    <experiments>3</experiments>
</comment>
<comment type="interaction">
    <interactant intactId="EBI-17187481">
        <id>P12318-2</id>
    </interactant>
    <interactant intactId="EBI-10267100">
        <id>Q8N6G5</id>
        <label>CSGALNACT2</label>
    </interactant>
    <organismsDiffer>false</organismsDiffer>
    <experiments>3</experiments>
</comment>
<comment type="interaction">
    <interactant intactId="EBI-17187481">
        <id>P12318-2</id>
    </interactant>
    <interactant intactId="EBI-3911467">
        <id>Q07325</id>
        <label>CXCL9</label>
    </interactant>
    <organismsDiffer>false</organismsDiffer>
    <experiments>3</experiments>
</comment>
<comment type="interaction">
    <interactant intactId="EBI-17187481">
        <id>P12318-2</id>
    </interactant>
    <interactant intactId="EBI-12175685">
        <id>Q14802-3</id>
        <label>FXYD3</label>
    </interactant>
    <organismsDiffer>false</organismsDiffer>
    <experiments>3</experiments>
</comment>
<comment type="interaction">
    <interactant intactId="EBI-17187481">
        <id>P12318-2</id>
    </interactant>
    <interactant intactId="EBI-11991950">
        <id>Q8WWP7</id>
        <label>GIMAP1</label>
    </interactant>
    <organismsDiffer>false</organismsDiffer>
    <experiments>3</experiments>
</comment>
<comment type="interaction">
    <interactant intactId="EBI-17187481">
        <id>P12318-2</id>
    </interactant>
    <interactant intactId="EBI-8449636">
        <id>P30301</id>
        <label>MIP</label>
    </interactant>
    <organismsDiffer>false</organismsDiffer>
    <experiments>3</experiments>
</comment>
<comment type="interaction">
    <interactant intactId="EBI-17187481">
        <id>P12318-2</id>
    </interactant>
    <interactant intactId="EBI-6380741">
        <id>P42857</id>
        <label>NSG1</label>
    </interactant>
    <organismsDiffer>false</organismsDiffer>
    <experiments>3</experiments>
</comment>
<comment type="interaction">
    <interactant intactId="EBI-17187481">
        <id>P12318-2</id>
    </interactant>
    <interactant intactId="EBI-749270">
        <id>Q8N6R1</id>
        <label>SERP2</label>
    </interactant>
    <organismsDiffer>false</organismsDiffer>
    <experiments>3</experiments>
</comment>
<comment type="interaction">
    <interactant intactId="EBI-17187481">
        <id>P12318-2</id>
    </interactant>
    <interactant intactId="EBI-10179682">
        <id>O00526</id>
        <label>UPK2</label>
    </interactant>
    <organismsDiffer>false</organismsDiffer>
    <experiments>3</experiments>
</comment>
<comment type="subcellular location">
    <subcellularLocation>
        <location evidence="9">Cell membrane</location>
        <topology evidence="9">Single-pass type I membrane protein</topology>
    </subcellularLocation>
</comment>
<comment type="alternative products">
    <event type="alternative splicing"/>
    <isoform>
        <id>P12318-1</id>
        <name>1</name>
        <sequence type="displayed"/>
    </isoform>
    <isoform>
        <id>P12318-2</id>
        <name>2</name>
        <sequence type="described" ref="VSP_036865"/>
    </isoform>
</comment>
<comment type="tissue specificity">
    <text>Found on monocytes, neutrophils and eosinophil platelets.</text>
</comment>
<comment type="PTM">
    <text evidence="14 17">Phosphorylated by SRC-type Tyr-kinases such as LYN, BLK, FYN, HCK and SYK.</text>
</comment>
<comment type="sequence caution" evidence="19">
    <conflict type="erroneous initiation">
        <sequence resource="EMBL-CDS" id="AAA35932"/>
    </conflict>
</comment>
<sequence>MTMETQMSQNVCPRNLWLLQPLTVLLLLASADSQAAAPPKAVLKLEPPWINVLQEDSVTLTCQGARSPESDSIQWFHNGNLIPTHTQPSYRFKANNNDSGEYTCQTGQTSLSDPVHLTVLSEWLVLQTPHLEFQEGETIMLRCHSWKDKPLVKVTFFQNGKSQKFSHLDPTFSIPQANHSHSGDYHCTGNIGYTLFSSKPVTITVQVPSMGSSSPMGIIVAVVIATAVAAIVAAVVALIYCRKKRISANSTDPVKAAQFEPPGRQMIAIRKRQLEETNNDYETADGGYMTLNPRAPTDDDKNIYLTLPPNDHVNSNN</sequence>
<feature type="signal peptide" evidence="4">
    <location>
        <begin position="1"/>
        <end position="33"/>
    </location>
</feature>
<feature type="chain" id="PRO_0000015145" description="Low affinity immunoglobulin gamma Fc region receptor II-a">
    <location>
        <begin position="34"/>
        <end position="317"/>
    </location>
</feature>
<feature type="topological domain" description="Extracellular" evidence="1">
    <location>
        <begin position="34"/>
        <end position="217"/>
    </location>
</feature>
<feature type="transmembrane region" description="Helical" evidence="1">
    <location>
        <begin position="218"/>
        <end position="240"/>
    </location>
</feature>
<feature type="topological domain" description="Cytoplasmic" evidence="1">
    <location>
        <begin position="241"/>
        <end position="317"/>
    </location>
</feature>
<feature type="domain" description="Ig-like C2-type 1">
    <location>
        <begin position="39"/>
        <end position="118"/>
    </location>
</feature>
<feature type="domain" description="Ig-like C2-type 2">
    <location>
        <begin position="122"/>
        <end position="204"/>
    </location>
</feature>
<feature type="region of interest" description="Disordered" evidence="2">
    <location>
        <begin position="292"/>
        <end position="317"/>
    </location>
</feature>
<feature type="modified residue" description="Phosphotyrosine; by SRC-type Tyr-kinases" evidence="17">
    <location>
        <position position="288"/>
    </location>
</feature>
<feature type="modified residue" description="Phosphotyrosine; by SRC-type Tyr-kinases" evidence="17">
    <location>
        <position position="304"/>
    </location>
</feature>
<feature type="glycosylation site" description="N-linked (GlcNAc...) asparagine" evidence="4">
    <location>
        <position position="97"/>
    </location>
</feature>
<feature type="glycosylation site" description="N-linked (GlcNAc...) asparagine" evidence="4">
    <location>
        <position position="178"/>
    </location>
</feature>
<feature type="disulfide bond" evidence="3 5 9 20">
    <location>
        <begin position="62"/>
        <end position="104"/>
    </location>
</feature>
<feature type="disulfide bond" evidence="3 5 9 20">
    <location>
        <begin position="143"/>
        <end position="187"/>
    </location>
</feature>
<feature type="splice variant" id="VSP_036865" description="In isoform 2." evidence="18">
    <location>
        <position position="35"/>
    </location>
</feature>
<feature type="sequence variant" id="VAR_054857" description="In dbSNP:rs9427398.">
    <original>Q</original>
    <variation>R</variation>
    <location>
        <position position="63"/>
    </location>
</feature>
<feature type="sequence variant" id="VAR_054858" description="In dbSNP:rs4986941.">
    <original>M</original>
    <variation>V</variation>
    <location>
        <position position="140"/>
    </location>
</feature>
<feature type="sequence variant" id="VAR_003955" description="Probable risk factor for lupus nephritis; does not efficiently recognize IgG2; dbSNP:rs1801274." evidence="8 10 11 12 13 16">
    <original>H</original>
    <variation>R</variation>
    <location>
        <position position="167"/>
    </location>
</feature>
<feature type="sequence variant" id="VAR_054859" description="In dbSNP:rs17851834." evidence="8">
    <original>I</original>
    <variation>V</variation>
    <location>
        <position position="218"/>
    </location>
</feature>
<feature type="sequence conflict" description="In Ref. 2; AAA35827." evidence="19" ref="2">
    <original>T</original>
    <variation>A</variation>
    <location>
        <position position="2"/>
    </location>
</feature>
<feature type="strand" evidence="23">
    <location>
        <begin position="42"/>
        <end position="47"/>
    </location>
</feature>
<feature type="strand" evidence="23">
    <location>
        <begin position="50"/>
        <end position="53"/>
    </location>
</feature>
<feature type="strand" evidence="23">
    <location>
        <begin position="57"/>
        <end position="64"/>
    </location>
</feature>
<feature type="strand" evidence="23">
    <location>
        <begin position="68"/>
        <end position="71"/>
    </location>
</feature>
<feature type="strand" evidence="23">
    <location>
        <begin position="73"/>
        <end position="77"/>
    </location>
</feature>
<feature type="strand" evidence="21">
    <location>
        <begin position="80"/>
        <end position="82"/>
    </location>
</feature>
<feature type="strand" evidence="23">
    <location>
        <begin position="87"/>
        <end position="93"/>
    </location>
</feature>
<feature type="helix" evidence="23">
    <location>
        <begin position="96"/>
        <end position="98"/>
    </location>
</feature>
<feature type="strand" evidence="23">
    <location>
        <begin position="100"/>
        <end position="106"/>
    </location>
</feature>
<feature type="strand" evidence="22">
    <location>
        <begin position="107"/>
        <end position="110"/>
    </location>
</feature>
<feature type="strand" evidence="23">
    <location>
        <begin position="115"/>
        <end position="120"/>
    </location>
</feature>
<feature type="strand" evidence="23">
    <location>
        <begin position="123"/>
        <end position="127"/>
    </location>
</feature>
<feature type="strand" evidence="23">
    <location>
        <begin position="131"/>
        <end position="133"/>
    </location>
</feature>
<feature type="strand" evidence="23">
    <location>
        <begin position="139"/>
        <end position="145"/>
    </location>
</feature>
<feature type="helix" evidence="23">
    <location>
        <begin position="146"/>
        <end position="148"/>
    </location>
</feature>
<feature type="strand" evidence="23">
    <location>
        <begin position="151"/>
        <end position="158"/>
    </location>
</feature>
<feature type="strand" evidence="23">
    <location>
        <begin position="161"/>
        <end position="168"/>
    </location>
</feature>
<feature type="strand" evidence="23">
    <location>
        <begin position="171"/>
        <end position="176"/>
    </location>
</feature>
<feature type="helix" evidence="23">
    <location>
        <begin position="179"/>
        <end position="181"/>
    </location>
</feature>
<feature type="strand" evidence="23">
    <location>
        <begin position="183"/>
        <end position="191"/>
    </location>
</feature>
<feature type="strand" evidence="23">
    <location>
        <begin position="194"/>
        <end position="197"/>
    </location>
</feature>
<feature type="strand" evidence="23">
    <location>
        <begin position="201"/>
        <end position="205"/>
    </location>
</feature>
<name>FCG2A_HUMAN</name>
<accession>P12318</accession>
<accession>Q8WUN1</accession>
<accession>Q8WW64</accession>
<keyword id="KW-0002">3D-structure</keyword>
<keyword id="KW-0025">Alternative splicing</keyword>
<keyword id="KW-1003">Cell membrane</keyword>
<keyword id="KW-0903">Direct protein sequencing</keyword>
<keyword id="KW-1015">Disulfide bond</keyword>
<keyword id="KW-0325">Glycoprotein</keyword>
<keyword id="KW-0390">IgG-binding protein</keyword>
<keyword id="KW-0391">Immunity</keyword>
<keyword id="KW-0393">Immunoglobulin domain</keyword>
<keyword id="KW-0472">Membrane</keyword>
<keyword id="KW-0597">Phosphoprotein</keyword>
<keyword id="KW-1267">Proteomics identification</keyword>
<keyword id="KW-0675">Receptor</keyword>
<keyword id="KW-1185">Reference proteome</keyword>
<keyword id="KW-0677">Repeat</keyword>
<keyword id="KW-0732">Signal</keyword>
<keyword id="KW-0812">Transmembrane</keyword>
<keyword id="KW-1133">Transmembrane helix</keyword>
<dbReference type="EMBL" id="Y00644">
    <property type="protein sequence ID" value="CAA68672.1"/>
    <property type="molecule type" value="mRNA"/>
</dbReference>
<dbReference type="EMBL" id="M31932">
    <property type="protein sequence ID" value="AAA35827.1"/>
    <property type="molecule type" value="mRNA"/>
</dbReference>
<dbReference type="EMBL" id="AL590385">
    <property type="status" value="NOT_ANNOTATED_CDS"/>
    <property type="molecule type" value="Genomic_DNA"/>
</dbReference>
<dbReference type="EMBL" id="BC019931">
    <property type="protein sequence ID" value="AAH19931.1"/>
    <property type="molecule type" value="mRNA"/>
</dbReference>
<dbReference type="EMBL" id="BC020823">
    <property type="protein sequence ID" value="AAH20823.1"/>
    <property type="molecule type" value="mRNA"/>
</dbReference>
<dbReference type="EMBL" id="J03619">
    <property type="protein sequence ID" value="AAA35932.1"/>
    <property type="status" value="ALT_INIT"/>
    <property type="molecule type" value="mRNA"/>
</dbReference>
<dbReference type="CCDS" id="CCDS30922.1">
    <molecule id="P12318-2"/>
</dbReference>
<dbReference type="CCDS" id="CCDS44264.1">
    <molecule id="P12318-1"/>
</dbReference>
<dbReference type="PIR" id="JL0118">
    <property type="entry name" value="JL0118"/>
</dbReference>
<dbReference type="RefSeq" id="NP_001129691.1">
    <molecule id="P12318-1"/>
    <property type="nucleotide sequence ID" value="NM_001136219.3"/>
</dbReference>
<dbReference type="RefSeq" id="NP_067674.2">
    <molecule id="P12318-2"/>
    <property type="nucleotide sequence ID" value="NM_021642.5"/>
</dbReference>
<dbReference type="PDB" id="1FCG">
    <property type="method" value="X-ray"/>
    <property type="resolution" value="2.00 A"/>
    <property type="chains" value="A=34-207"/>
</dbReference>
<dbReference type="PDB" id="1H9V">
    <property type="method" value="X-ray"/>
    <property type="resolution" value="3.00 A"/>
    <property type="chains" value="A=37-208"/>
</dbReference>
<dbReference type="PDB" id="3D5O">
    <property type="method" value="X-ray"/>
    <property type="resolution" value="2.80 A"/>
    <property type="chains" value="F=37-207"/>
</dbReference>
<dbReference type="PDB" id="3RY4">
    <property type="method" value="X-ray"/>
    <property type="resolution" value="1.50 A"/>
    <property type="chains" value="A=37-206"/>
</dbReference>
<dbReference type="PDB" id="3RY5">
    <property type="method" value="X-ray"/>
    <property type="resolution" value="2.30 A"/>
    <property type="chains" value="A=37-206"/>
</dbReference>
<dbReference type="PDB" id="3RY6">
    <property type="method" value="X-ray"/>
    <property type="resolution" value="3.80 A"/>
    <property type="chains" value="C=40-206"/>
</dbReference>
<dbReference type="PDB" id="8CHA">
    <property type="method" value="X-ray"/>
    <property type="resolution" value="1.81 A"/>
    <property type="chains" value="A=1-209"/>
</dbReference>
<dbReference type="PDBsum" id="1FCG"/>
<dbReference type="PDBsum" id="1H9V"/>
<dbReference type="PDBsum" id="3D5O"/>
<dbReference type="PDBsum" id="3RY4"/>
<dbReference type="PDBsum" id="3RY5"/>
<dbReference type="PDBsum" id="3RY6"/>
<dbReference type="PDBsum" id="8CHA"/>
<dbReference type="SMR" id="P12318"/>
<dbReference type="BioGRID" id="108506">
    <property type="interactions" value="60"/>
</dbReference>
<dbReference type="ELM" id="P12318"/>
<dbReference type="FunCoup" id="P12318">
    <property type="interactions" value="507"/>
</dbReference>
<dbReference type="IntAct" id="P12318">
    <property type="interactions" value="33"/>
</dbReference>
<dbReference type="MINT" id="P12318"/>
<dbReference type="STRING" id="9606.ENSP00000271450"/>
<dbReference type="BindingDB" id="P12318"/>
<dbReference type="ChEMBL" id="CHEMBL5841"/>
<dbReference type="DrugBank" id="DB00054">
    <property type="generic name" value="Abciximab"/>
</dbReference>
<dbReference type="DrugBank" id="DB00087">
    <property type="generic name" value="Alemtuzumab"/>
</dbReference>
<dbReference type="DrugBank" id="DB00112">
    <property type="generic name" value="Bevacizumab"/>
</dbReference>
<dbReference type="DrugBank" id="DB06607">
    <property type="generic name" value="Catumaxomab"/>
</dbReference>
<dbReference type="DrugBank" id="DB00002">
    <property type="generic name" value="Cetuximab"/>
</dbReference>
<dbReference type="DrugBank" id="DB00111">
    <property type="generic name" value="Daclizumab"/>
</dbReference>
<dbReference type="DrugBank" id="DB00005">
    <property type="generic name" value="Etanercept"/>
</dbReference>
<dbReference type="DrugBank" id="DB00028">
    <property type="generic name" value="Human immunoglobulin G"/>
</dbReference>
<dbReference type="DrugBank" id="DB11767">
    <property type="generic name" value="Sarilumab"/>
</dbReference>
<dbReference type="GlyConnect" id="2998">
    <molecule id="P12318-1"/>
    <property type="glycosylation" value="29 N-Linked glycans"/>
</dbReference>
<dbReference type="GlyCosmos" id="P12318">
    <property type="glycosylation" value="2 sites, No reported glycans"/>
</dbReference>
<dbReference type="GlyGen" id="P12318">
    <property type="glycosylation" value="3 sites, 38 N-linked glycans (1 site)"/>
</dbReference>
<dbReference type="iPTMnet" id="P12318"/>
<dbReference type="PhosphoSitePlus" id="P12318"/>
<dbReference type="SwissPalm" id="P12318"/>
<dbReference type="BioMuta" id="FCGR2A"/>
<dbReference type="DMDM" id="160332371"/>
<dbReference type="MassIVE" id="P12318"/>
<dbReference type="PaxDb" id="9606-ENSP00000271450"/>
<dbReference type="PeptideAtlas" id="P12318"/>
<dbReference type="ProteomicsDB" id="52849">
    <molecule id="P12318-1"/>
</dbReference>
<dbReference type="ProteomicsDB" id="52850">
    <molecule id="P12318-2"/>
</dbReference>
<dbReference type="Pumba" id="P12318"/>
<dbReference type="ABCD" id="P12318">
    <property type="antibodies" value="8 sequenced antibodies"/>
</dbReference>
<dbReference type="Antibodypedia" id="2489">
    <property type="antibodies" value="1510 antibodies from 45 providers"/>
</dbReference>
<dbReference type="DNASU" id="2212"/>
<dbReference type="Ensembl" id="ENST00000271450.12">
    <molecule id="P12318-1"/>
    <property type="protein sequence ID" value="ENSP00000271450.6"/>
    <property type="gene ID" value="ENSG00000143226.16"/>
</dbReference>
<dbReference type="Ensembl" id="ENST00000367972.8">
    <molecule id="P12318-2"/>
    <property type="protein sequence ID" value="ENSP00000356949.4"/>
    <property type="gene ID" value="ENSG00000143226.16"/>
</dbReference>
<dbReference type="GeneID" id="2212"/>
<dbReference type="KEGG" id="hsa:2212"/>
<dbReference type="MANE-Select" id="ENST00000271450.12">
    <property type="protein sequence ID" value="ENSP00000271450.6"/>
    <property type="RefSeq nucleotide sequence ID" value="NM_001136219.3"/>
    <property type="RefSeq protein sequence ID" value="NP_001129691.1"/>
</dbReference>
<dbReference type="UCSC" id="uc001gam.4">
    <molecule id="P12318-1"/>
    <property type="organism name" value="human"/>
</dbReference>
<dbReference type="AGR" id="HGNC:3616"/>
<dbReference type="CTD" id="2212"/>
<dbReference type="DisGeNET" id="2212"/>
<dbReference type="GeneCards" id="FCGR2A"/>
<dbReference type="HGNC" id="HGNC:3616">
    <property type="gene designation" value="FCGR2A"/>
</dbReference>
<dbReference type="HPA" id="ENSG00000143226">
    <property type="expression patterns" value="Tissue enhanced (lymphoid tissue, placenta)"/>
</dbReference>
<dbReference type="MalaCards" id="FCGR2A"/>
<dbReference type="MIM" id="146790">
    <property type="type" value="gene"/>
</dbReference>
<dbReference type="neXtProt" id="NX_P12318"/>
<dbReference type="OpenTargets" id="ENSG00000143226"/>
<dbReference type="PharmGKB" id="PA28063"/>
<dbReference type="VEuPathDB" id="HostDB:ENSG00000143226"/>
<dbReference type="eggNOG" id="ENOG502SVEW">
    <property type="taxonomic scope" value="Eukaryota"/>
</dbReference>
<dbReference type="GeneTree" id="ENSGT01050000244808"/>
<dbReference type="HOGENOM" id="CLU_023383_1_2_1"/>
<dbReference type="InParanoid" id="P12318"/>
<dbReference type="OMA" id="LKCHGAH"/>
<dbReference type="OrthoDB" id="6151406at2759"/>
<dbReference type="PAN-GO" id="P12318">
    <property type="GO annotations" value="4 GO annotations based on evolutionary models"/>
</dbReference>
<dbReference type="PhylomeDB" id="P12318"/>
<dbReference type="TreeFam" id="TF335097"/>
<dbReference type="PathwayCommons" id="P12318"/>
<dbReference type="Reactome" id="R-HSA-2029481">
    <property type="pathway name" value="FCGR activation"/>
</dbReference>
<dbReference type="Reactome" id="R-HSA-2029482">
    <property type="pathway name" value="Regulation of actin dynamics for phagocytic cup formation"/>
</dbReference>
<dbReference type="Reactome" id="R-HSA-2029485">
    <property type="pathway name" value="Role of phospholipids in phagocytosis"/>
</dbReference>
<dbReference type="Reactome" id="R-HSA-6798695">
    <property type="pathway name" value="Neutrophil degranulation"/>
</dbReference>
<dbReference type="Reactome" id="R-HSA-9664323">
    <property type="pathway name" value="FCGR3A-mediated IL10 synthesis"/>
</dbReference>
<dbReference type="SignaLink" id="P12318"/>
<dbReference type="SIGNOR" id="P12318"/>
<dbReference type="BioGRID-ORCS" id="2212">
    <property type="hits" value="11 hits in 1123 CRISPR screens"/>
</dbReference>
<dbReference type="ChiTaRS" id="FCGR2A">
    <property type="organism name" value="human"/>
</dbReference>
<dbReference type="EvolutionaryTrace" id="P12318"/>
<dbReference type="GeneWiki" id="FCGR2A"/>
<dbReference type="GenomeRNAi" id="2212"/>
<dbReference type="Pharos" id="P12318">
    <property type="development level" value="Tbio"/>
</dbReference>
<dbReference type="PRO" id="PR:P12318"/>
<dbReference type="Proteomes" id="UP000005640">
    <property type="component" value="Chromosome 1"/>
</dbReference>
<dbReference type="RNAct" id="P12318">
    <property type="molecule type" value="protein"/>
</dbReference>
<dbReference type="Bgee" id="ENSG00000143226">
    <property type="expression patterns" value="Expressed in blood and 105 other cell types or tissues"/>
</dbReference>
<dbReference type="ExpressionAtlas" id="P12318">
    <property type="expression patterns" value="baseline and differential"/>
</dbReference>
<dbReference type="GO" id="GO:0009897">
    <property type="term" value="C:external side of plasma membrane"/>
    <property type="evidence" value="ECO:0000318"/>
    <property type="project" value="GO_Central"/>
</dbReference>
<dbReference type="GO" id="GO:0005886">
    <property type="term" value="C:plasma membrane"/>
    <property type="evidence" value="ECO:0000304"/>
    <property type="project" value="Reactome"/>
</dbReference>
<dbReference type="GO" id="GO:0030667">
    <property type="term" value="C:secretory granule membrane"/>
    <property type="evidence" value="ECO:0000304"/>
    <property type="project" value="Reactome"/>
</dbReference>
<dbReference type="GO" id="GO:0019864">
    <property type="term" value="F:IgG binding"/>
    <property type="evidence" value="ECO:0000318"/>
    <property type="project" value="GO_Central"/>
</dbReference>
<dbReference type="GO" id="GO:0019770">
    <property type="term" value="F:IgG receptor activity"/>
    <property type="evidence" value="ECO:0000318"/>
    <property type="project" value="GO_Central"/>
</dbReference>
<dbReference type="GO" id="GO:0001788">
    <property type="term" value="P:antibody-dependent cellular cytotoxicity"/>
    <property type="evidence" value="ECO:0000318"/>
    <property type="project" value="GO_Central"/>
</dbReference>
<dbReference type="GO" id="GO:0007166">
    <property type="term" value="P:cell surface receptor signaling pathway"/>
    <property type="evidence" value="ECO:0000318"/>
    <property type="project" value="GO_Central"/>
</dbReference>
<dbReference type="GO" id="GO:0050766">
    <property type="term" value="P:positive regulation of phagocytosis"/>
    <property type="evidence" value="ECO:0000318"/>
    <property type="project" value="GO_Central"/>
</dbReference>
<dbReference type="GO" id="GO:0032760">
    <property type="term" value="P:positive regulation of tumor necrosis factor production"/>
    <property type="evidence" value="ECO:0000318"/>
    <property type="project" value="GO_Central"/>
</dbReference>
<dbReference type="CDD" id="cd05752">
    <property type="entry name" value="Ig1_FcgammaR_like"/>
    <property type="match status" value="1"/>
</dbReference>
<dbReference type="CDD" id="cd05753">
    <property type="entry name" value="Ig2_FcgammaR_like"/>
    <property type="match status" value="1"/>
</dbReference>
<dbReference type="FunFam" id="2.60.40.10:FF:000217">
    <property type="entry name" value="High affinity immunoglobulin gamma Fc receptor I"/>
    <property type="match status" value="1"/>
</dbReference>
<dbReference type="FunFam" id="2.60.40.10:FF:000356">
    <property type="entry name" value="Low affinity immunoglobulin gamma Fc region receptor III-A"/>
    <property type="match status" value="1"/>
</dbReference>
<dbReference type="Gene3D" id="2.60.40.10">
    <property type="entry name" value="Immunoglobulins"/>
    <property type="match status" value="2"/>
</dbReference>
<dbReference type="InterPro" id="IPR007110">
    <property type="entry name" value="Ig-like_dom"/>
</dbReference>
<dbReference type="InterPro" id="IPR036179">
    <property type="entry name" value="Ig-like_dom_sf"/>
</dbReference>
<dbReference type="InterPro" id="IPR013783">
    <property type="entry name" value="Ig-like_fold"/>
</dbReference>
<dbReference type="InterPro" id="IPR050488">
    <property type="entry name" value="Ig_Fc_receptor"/>
</dbReference>
<dbReference type="InterPro" id="IPR003599">
    <property type="entry name" value="Ig_sub"/>
</dbReference>
<dbReference type="InterPro" id="IPR003598">
    <property type="entry name" value="Ig_sub2"/>
</dbReference>
<dbReference type="PANTHER" id="PTHR11481">
    <property type="entry name" value="IMMUNOGLOBULIN FC RECEPTOR"/>
    <property type="match status" value="1"/>
</dbReference>
<dbReference type="PANTHER" id="PTHR11481:SF106">
    <property type="entry name" value="LOW AFFINITY IMMUNOGLOBULIN GAMMA FC REGION RECEPTOR II-A"/>
    <property type="match status" value="1"/>
</dbReference>
<dbReference type="Pfam" id="PF13895">
    <property type="entry name" value="Ig_2"/>
    <property type="match status" value="2"/>
</dbReference>
<dbReference type="SMART" id="SM00409">
    <property type="entry name" value="IG"/>
    <property type="match status" value="2"/>
</dbReference>
<dbReference type="SMART" id="SM00408">
    <property type="entry name" value="IGc2"/>
    <property type="match status" value="2"/>
</dbReference>
<dbReference type="SUPFAM" id="SSF48726">
    <property type="entry name" value="Immunoglobulin"/>
    <property type="match status" value="2"/>
</dbReference>
<dbReference type="PROSITE" id="PS50835">
    <property type="entry name" value="IG_LIKE"/>
    <property type="match status" value="2"/>
</dbReference>
<proteinExistence type="evidence at protein level"/>
<reference key="1">
    <citation type="journal article" date="1987" name="J. Exp. Med.">
        <title>Isolation and expression of cDNA clones encoding a human receptor for IgG (Fc gamma RII).</title>
        <authorList>
            <person name="Stuart S.G."/>
            <person name="Trounstine M.L."/>
            <person name="Vaux D.J.T."/>
            <person name="Koch T."/>
            <person name="Martens C.L."/>
            <person name="Moore K.W."/>
        </authorList>
    </citation>
    <scope>NUCLEOTIDE SEQUENCE [MRNA] (ISOFORM 1)</scope>
    <scope>VARIANT ARG-167</scope>
</reference>
<reference key="2">
    <citation type="journal article" date="1989" name="J. Exp. Med.">
        <title>Structure and expression of human IgG FcRII(CD32). Functional heterogeneity is encoded by the alternatively spliced products of multiple genes.</title>
        <authorList>
            <person name="Brooks D.G."/>
            <person name="Qiu W.Q."/>
            <person name="Luster A.D."/>
            <person name="Ravetch J.V."/>
        </authorList>
    </citation>
    <scope>NUCLEOTIDE SEQUENCE [MRNA] (ISOFORM 1)</scope>
    <scope>VARIANT ARG-167</scope>
</reference>
<reference key="3">
    <citation type="journal article" date="2006" name="Nature">
        <title>The DNA sequence and biological annotation of human chromosome 1.</title>
        <authorList>
            <person name="Gregory S.G."/>
            <person name="Barlow K.F."/>
            <person name="McLay K.E."/>
            <person name="Kaul R."/>
            <person name="Swarbreck D."/>
            <person name="Dunham A."/>
            <person name="Scott C.E."/>
            <person name="Howe K.L."/>
            <person name="Woodfine K."/>
            <person name="Spencer C.C.A."/>
            <person name="Jones M.C."/>
            <person name="Gillson C."/>
            <person name="Searle S."/>
            <person name="Zhou Y."/>
            <person name="Kokocinski F."/>
            <person name="McDonald L."/>
            <person name="Evans R."/>
            <person name="Phillips K."/>
            <person name="Atkinson A."/>
            <person name="Cooper R."/>
            <person name="Jones C."/>
            <person name="Hall R.E."/>
            <person name="Andrews T.D."/>
            <person name="Lloyd C."/>
            <person name="Ainscough R."/>
            <person name="Almeida J.P."/>
            <person name="Ambrose K.D."/>
            <person name="Anderson F."/>
            <person name="Andrew R.W."/>
            <person name="Ashwell R.I.S."/>
            <person name="Aubin K."/>
            <person name="Babbage A.K."/>
            <person name="Bagguley C.L."/>
            <person name="Bailey J."/>
            <person name="Beasley H."/>
            <person name="Bethel G."/>
            <person name="Bird C.P."/>
            <person name="Bray-Allen S."/>
            <person name="Brown J.Y."/>
            <person name="Brown A.J."/>
            <person name="Buckley D."/>
            <person name="Burton J."/>
            <person name="Bye J."/>
            <person name="Carder C."/>
            <person name="Chapman J.C."/>
            <person name="Clark S.Y."/>
            <person name="Clarke G."/>
            <person name="Clee C."/>
            <person name="Cobley V."/>
            <person name="Collier R.E."/>
            <person name="Corby N."/>
            <person name="Coville G.J."/>
            <person name="Davies J."/>
            <person name="Deadman R."/>
            <person name="Dunn M."/>
            <person name="Earthrowl M."/>
            <person name="Ellington A.G."/>
            <person name="Errington H."/>
            <person name="Frankish A."/>
            <person name="Frankland J."/>
            <person name="French L."/>
            <person name="Garner P."/>
            <person name="Garnett J."/>
            <person name="Gay L."/>
            <person name="Ghori M.R.J."/>
            <person name="Gibson R."/>
            <person name="Gilby L.M."/>
            <person name="Gillett W."/>
            <person name="Glithero R.J."/>
            <person name="Grafham D.V."/>
            <person name="Griffiths C."/>
            <person name="Griffiths-Jones S."/>
            <person name="Grocock R."/>
            <person name="Hammond S."/>
            <person name="Harrison E.S.I."/>
            <person name="Hart E."/>
            <person name="Haugen E."/>
            <person name="Heath P.D."/>
            <person name="Holmes S."/>
            <person name="Holt K."/>
            <person name="Howden P.J."/>
            <person name="Hunt A.R."/>
            <person name="Hunt S.E."/>
            <person name="Hunter G."/>
            <person name="Isherwood J."/>
            <person name="James R."/>
            <person name="Johnson C."/>
            <person name="Johnson D."/>
            <person name="Joy A."/>
            <person name="Kay M."/>
            <person name="Kershaw J.K."/>
            <person name="Kibukawa M."/>
            <person name="Kimberley A.M."/>
            <person name="King A."/>
            <person name="Knights A.J."/>
            <person name="Lad H."/>
            <person name="Laird G."/>
            <person name="Lawlor S."/>
            <person name="Leongamornlert D.A."/>
            <person name="Lloyd D.M."/>
            <person name="Loveland J."/>
            <person name="Lovell J."/>
            <person name="Lush M.J."/>
            <person name="Lyne R."/>
            <person name="Martin S."/>
            <person name="Mashreghi-Mohammadi M."/>
            <person name="Matthews L."/>
            <person name="Matthews N.S.W."/>
            <person name="McLaren S."/>
            <person name="Milne S."/>
            <person name="Mistry S."/>
            <person name="Moore M.J.F."/>
            <person name="Nickerson T."/>
            <person name="O'Dell C.N."/>
            <person name="Oliver K."/>
            <person name="Palmeiri A."/>
            <person name="Palmer S.A."/>
            <person name="Parker A."/>
            <person name="Patel D."/>
            <person name="Pearce A.V."/>
            <person name="Peck A.I."/>
            <person name="Pelan S."/>
            <person name="Phelps K."/>
            <person name="Phillimore B.J."/>
            <person name="Plumb R."/>
            <person name="Rajan J."/>
            <person name="Raymond C."/>
            <person name="Rouse G."/>
            <person name="Saenphimmachak C."/>
            <person name="Sehra H.K."/>
            <person name="Sheridan E."/>
            <person name="Shownkeen R."/>
            <person name="Sims S."/>
            <person name="Skuce C.D."/>
            <person name="Smith M."/>
            <person name="Steward C."/>
            <person name="Subramanian S."/>
            <person name="Sycamore N."/>
            <person name="Tracey A."/>
            <person name="Tromans A."/>
            <person name="Van Helmond Z."/>
            <person name="Wall M."/>
            <person name="Wallis J.M."/>
            <person name="White S."/>
            <person name="Whitehead S.L."/>
            <person name="Wilkinson J.E."/>
            <person name="Willey D.L."/>
            <person name="Williams H."/>
            <person name="Wilming L."/>
            <person name="Wray P.W."/>
            <person name="Wu Z."/>
            <person name="Coulson A."/>
            <person name="Vaudin M."/>
            <person name="Sulston J.E."/>
            <person name="Durbin R.M."/>
            <person name="Hubbard T."/>
            <person name="Wooster R."/>
            <person name="Dunham I."/>
            <person name="Carter N.P."/>
            <person name="McVean G."/>
            <person name="Ross M.T."/>
            <person name="Harrow J."/>
            <person name="Olson M.V."/>
            <person name="Beck S."/>
            <person name="Rogers J."/>
            <person name="Bentley D.R."/>
        </authorList>
    </citation>
    <scope>NUCLEOTIDE SEQUENCE [LARGE SCALE GENOMIC DNA]</scope>
</reference>
<reference key="4">
    <citation type="journal article" date="2004" name="Genome Res.">
        <title>The status, quality, and expansion of the NIH full-length cDNA project: the Mammalian Gene Collection (MGC).</title>
        <authorList>
            <consortium name="The MGC Project Team"/>
        </authorList>
    </citation>
    <scope>NUCLEOTIDE SEQUENCE [LARGE SCALE MRNA] (ISOFORM 2)</scope>
    <scope>VARIANTS ARG-167 AND VAL-218</scope>
    <source>
        <tissue>Lung</tissue>
        <tissue>Testis</tissue>
    </source>
</reference>
<reference key="5">
    <citation type="journal article" date="1988" name="Proc. Natl. Acad. Sci. U.S.A.">
        <title>Molecular cloning of a human immunoglobulin G Fc receptor.</title>
        <authorList>
            <person name="Hibbs M.L."/>
            <person name="Bonadonna L."/>
            <person name="Scott B.M."/>
            <person name="McKenzie I.F.C."/>
            <person name="Hogarth P.M."/>
        </authorList>
    </citation>
    <scope>NUCLEOTIDE SEQUENCE [MRNA] OF 2-317 (ISOFORM 1)</scope>
    <scope>VARIANT ARG-167</scope>
</reference>
<reference key="6">
    <citation type="journal article" date="1988" name="EMBO J.">
        <title>Isolation of cDNAs for two distinct human Fc receptors by ligand affinity cloning.</title>
        <authorList>
            <person name="Stengelin S."/>
            <person name="Stamenkovic I."/>
            <person name="Seed B."/>
        </authorList>
    </citation>
    <scope>NUCLEOTIDE SEQUENCE [MRNA] OF 6-317 (ISOFORM 1)</scope>
    <scope>VARIANT ARG-167</scope>
</reference>
<reference key="7">
    <citation type="journal article" date="1989" name="Immunogenetics">
        <title>Identification of multiple isoforms of the low-affinity human IgG Fc receptor.</title>
        <authorList>
            <person name="Seki T."/>
        </authorList>
    </citation>
    <scope>NUCLEOTIDE SEQUENCE [MRNA] OF 6-317 (ISOFORM 1)</scope>
</reference>
<reference key="8">
    <citation type="journal article" date="1999" name="Immunol. Lett.">
        <title>Biochemical analysis and crystallisation of Fc gamma RIIa, the low affinity receptor for IgG.</title>
        <authorList>
            <person name="Powell M.S."/>
            <person name="Barton P.A."/>
            <person name="Emmanouilidis D."/>
            <person name="Wines B.D."/>
            <person name="Neumann G.M."/>
            <person name="Peitersz G.A."/>
            <person name="Maxwell K.F."/>
            <person name="Garrett T.P."/>
            <person name="Hogarth P.M."/>
        </authorList>
    </citation>
    <scope>PROTEIN SEQUENCE OF N-TERMINUS</scope>
    <scope>GLYCOSYLATION AT ASN-97 AND ASN-178</scope>
    <scope>CRYSTALLIZATION</scope>
</reference>
<reference key="9">
    <citation type="journal article" date="1993" name="Proc. Natl. Acad. Sci. U.S.A.">
        <title>Association of immunoglobulin G Fc receptor II with Src-like protein-tyrosine kinase Fgr in neutrophils.</title>
        <authorList>
            <person name="Hamada F."/>
            <person name="Aoki M."/>
            <person name="Akiyama T."/>
            <person name="Toyoshima K."/>
        </authorList>
    </citation>
    <scope>INTERACTION WITH FGR</scope>
</reference>
<reference key="10">
    <citation type="journal article" date="1994" name="J. Biol. Chem.">
        <title>Physical and functional association of Src-related protein tyrosine kinases with Fc gamma RII in monocytic THP-1 cells.</title>
        <authorList>
            <person name="Ghazizadeh S."/>
            <person name="Bolen J.B."/>
            <person name="Fleit H.B."/>
        </authorList>
    </citation>
    <scope>INTERACTION WITH HCK</scope>
    <scope>PHOSPHORYLATION</scope>
</reference>
<reference key="11">
    <citation type="journal article" date="1996" name="Mol. Cell. Biol.">
        <title>In vivo and in vitro specificity of protein tyrosine kinases for immunoglobulin G receptor (FcgammaRII) phosphorylation.</title>
        <authorList>
            <person name="Bewarder N."/>
            <person name="Weinrich V."/>
            <person name="Budde P."/>
            <person name="Hartmann D."/>
            <person name="Flaswinkel H."/>
            <person name="Reth M."/>
            <person name="Frey J."/>
        </authorList>
    </citation>
    <scope>PHOSPHORYLATION AT TYR-288 AND TYR-304</scope>
</reference>
<reference key="12">
    <citation type="journal article" date="2001" name="J. Virol.">
        <title>Effector function activities of a panel of mutants of a broadly neutralizing antibody against human immunodeficiency virus type 1.</title>
        <authorList>
            <person name="Hezareh M."/>
            <person name="Hessell A.J."/>
            <person name="Jensen R.C."/>
            <person name="van de Winkel J.G."/>
            <person name="Parren P.W."/>
        </authorList>
    </citation>
    <scope>INTERACTION WITH IGHG1</scope>
</reference>
<reference key="13">
    <citation type="journal article" date="2003" name="J. Biol. Chem.">
        <title>SHIP-2 inositol phosphatase is inducibly expressed in human monocytes and serves to regulate Fcgamma receptor-mediated signaling.</title>
        <authorList>
            <person name="Pengal R.A."/>
            <person name="Ganesan L.P."/>
            <person name="Fang H."/>
            <person name="Marsh C.B."/>
            <person name="Anderson C.L."/>
            <person name="Tridandapani S."/>
        </authorList>
    </citation>
    <scope>INTERACTION WITH INPPL1</scope>
</reference>
<reference key="14">
    <citation type="journal article" date="1999" name="Nat. Struct. Biol.">
        <title>Crystal structure of the human leukocyte Fc receptor, Fc gammaRIIa.</title>
        <authorList>
            <person name="Maxwell K.F."/>
            <person name="Powell M.S."/>
            <person name="Hulett M.D."/>
            <person name="Barton P.A."/>
            <person name="McKenzie I.F."/>
            <person name="Garrett T.P."/>
            <person name="Hogarth P.M."/>
        </authorList>
    </citation>
    <scope>X-RAY CRYSTALLOGRAPHY (2.00 ANGSTROMS) OF 34-207</scope>
    <scope>DISULFIDE BONDS</scope>
</reference>
<reference key="15">
    <citation type="journal article" date="2001" name="J. Mol. Biol.">
        <title>Molecular basis for immune complex recognition: a comparison of Fc-receptor structures.</title>
        <authorList>
            <person name="Sondermann P."/>
            <person name="Kaiser J."/>
            <person name="Jacob U."/>
        </authorList>
    </citation>
    <scope>X-RAY CRYSTALLOGRAPHY (3.00 ANGSTROMS) OF 37-208</scope>
    <scope>DISULFIDE BONDS</scope>
</reference>
<reference key="16">
    <citation type="journal article" date="2008" name="Nature">
        <title>Structural recognition and functional activation of FcgammaR by innate pentraxins.</title>
        <authorList>
            <person name="Lu J."/>
            <person name="Marnell L.L."/>
            <person name="Marjon K.D."/>
            <person name="Mold C."/>
            <person name="Du Clos T.W."/>
            <person name="Sun P.D."/>
        </authorList>
    </citation>
    <scope>X-RAY CRYSTALLOGRAPHY (2.8 ANGSTROMS) OF 37-207 IN COMPLEX WITH APCS</scope>
    <scope>SUBCELLULAR LOCATION</scope>
    <scope>FUNCTION</scope>
    <scope>DISULFIDE BONDS</scope>
</reference>
<reference key="17">
    <citation type="journal article" date="1996" name="J. Clin. Invest.">
        <title>Fc gamma RIIA alleles are heritable risk factors for lupus nephritis in African Americans.</title>
        <authorList>
            <person name="Salmon J.E."/>
            <person name="Millard S."/>
            <person name="Schachter L.A."/>
            <person name="Arnett F.C."/>
            <person name="Ginzler E.M."/>
            <person name="Gourley M.F."/>
            <person name="Ramsey-Goldman R."/>
            <person name="Peterson M.G.E."/>
            <person name="Kimberly R.P."/>
        </authorList>
    </citation>
    <scope>VARIANT ARG-167</scope>
</reference>
<protein>
    <recommendedName>
        <fullName>Low affinity immunoglobulin gamma Fc region receptor II-a</fullName>
        <shortName>IgG Fc receptor II-a</shortName>
    </recommendedName>
    <alternativeName>
        <fullName>CDw32</fullName>
    </alternativeName>
    <alternativeName>
        <fullName>Fc-gamma RII-a</fullName>
        <shortName>Fc-gamma-RIIa</shortName>
        <shortName>FcRII-a</shortName>
    </alternativeName>
    <cdAntigenName>CD32</cdAntigenName>
</protein>